<proteinExistence type="inferred from homology"/>
<accession>A5D3F8</accession>
<organism>
    <name type="scientific">Pelotomaculum thermopropionicum (strain DSM 13744 / JCM 10971 / SI)</name>
    <dbReference type="NCBI Taxonomy" id="370438"/>
    <lineage>
        <taxon>Bacteria</taxon>
        <taxon>Bacillati</taxon>
        <taxon>Bacillota</taxon>
        <taxon>Clostridia</taxon>
        <taxon>Eubacteriales</taxon>
        <taxon>Desulfotomaculaceae</taxon>
        <taxon>Pelotomaculum</taxon>
    </lineage>
</organism>
<dbReference type="EMBL" id="AP009389">
    <property type="protein sequence ID" value="BAF59205.1"/>
    <property type="molecule type" value="Genomic_DNA"/>
</dbReference>
<dbReference type="SMR" id="A5D3F8"/>
<dbReference type="STRING" id="370438.PTH_1024"/>
<dbReference type="KEGG" id="pth:PTH_1024"/>
<dbReference type="eggNOG" id="COG0217">
    <property type="taxonomic scope" value="Bacteria"/>
</dbReference>
<dbReference type="HOGENOM" id="CLU_062974_2_2_9"/>
<dbReference type="Proteomes" id="UP000006556">
    <property type="component" value="Chromosome"/>
</dbReference>
<dbReference type="GO" id="GO:0005829">
    <property type="term" value="C:cytosol"/>
    <property type="evidence" value="ECO:0007669"/>
    <property type="project" value="TreeGrafter"/>
</dbReference>
<dbReference type="GO" id="GO:0003677">
    <property type="term" value="F:DNA binding"/>
    <property type="evidence" value="ECO:0007669"/>
    <property type="project" value="UniProtKB-UniRule"/>
</dbReference>
<dbReference type="GO" id="GO:0006355">
    <property type="term" value="P:regulation of DNA-templated transcription"/>
    <property type="evidence" value="ECO:0007669"/>
    <property type="project" value="UniProtKB-UniRule"/>
</dbReference>
<dbReference type="FunFam" id="1.10.10.200:FF:000002">
    <property type="entry name" value="Probable transcriptional regulatory protein CLM62_37755"/>
    <property type="match status" value="1"/>
</dbReference>
<dbReference type="FunFam" id="3.30.70.980:FF:000002">
    <property type="entry name" value="Probable transcriptional regulatory protein YebC"/>
    <property type="match status" value="1"/>
</dbReference>
<dbReference type="Gene3D" id="1.10.10.200">
    <property type="match status" value="1"/>
</dbReference>
<dbReference type="Gene3D" id="3.30.70.980">
    <property type="match status" value="2"/>
</dbReference>
<dbReference type="HAMAP" id="MF_00693">
    <property type="entry name" value="Transcrip_reg_TACO1"/>
    <property type="match status" value="1"/>
</dbReference>
<dbReference type="InterPro" id="IPR017856">
    <property type="entry name" value="Integrase-like_N"/>
</dbReference>
<dbReference type="InterPro" id="IPR048300">
    <property type="entry name" value="TACO1_YebC-like_2nd/3rd_dom"/>
</dbReference>
<dbReference type="InterPro" id="IPR049083">
    <property type="entry name" value="TACO1_YebC_N"/>
</dbReference>
<dbReference type="InterPro" id="IPR002876">
    <property type="entry name" value="Transcrip_reg_TACO1-like"/>
</dbReference>
<dbReference type="InterPro" id="IPR026564">
    <property type="entry name" value="Transcrip_reg_TACO1-like_dom3"/>
</dbReference>
<dbReference type="InterPro" id="IPR029072">
    <property type="entry name" value="YebC-like"/>
</dbReference>
<dbReference type="NCBIfam" id="NF001030">
    <property type="entry name" value="PRK00110.1"/>
    <property type="match status" value="1"/>
</dbReference>
<dbReference type="NCBIfam" id="NF009044">
    <property type="entry name" value="PRK12378.1"/>
    <property type="match status" value="1"/>
</dbReference>
<dbReference type="NCBIfam" id="TIGR01033">
    <property type="entry name" value="YebC/PmpR family DNA-binding transcriptional regulator"/>
    <property type="match status" value="1"/>
</dbReference>
<dbReference type="PANTHER" id="PTHR12532:SF6">
    <property type="entry name" value="TRANSCRIPTIONAL REGULATORY PROTEIN YEBC-RELATED"/>
    <property type="match status" value="1"/>
</dbReference>
<dbReference type="PANTHER" id="PTHR12532">
    <property type="entry name" value="TRANSLATIONAL ACTIVATOR OF CYTOCHROME C OXIDASE 1"/>
    <property type="match status" value="1"/>
</dbReference>
<dbReference type="Pfam" id="PF20772">
    <property type="entry name" value="TACO1_YebC_N"/>
    <property type="match status" value="1"/>
</dbReference>
<dbReference type="Pfam" id="PF01709">
    <property type="entry name" value="Transcrip_reg"/>
    <property type="match status" value="1"/>
</dbReference>
<dbReference type="SUPFAM" id="SSF75625">
    <property type="entry name" value="YebC-like"/>
    <property type="match status" value="1"/>
</dbReference>
<feature type="chain" id="PRO_1000083162" description="Probable transcriptional regulatory protein PTH_1024">
    <location>
        <begin position="1"/>
        <end position="243"/>
    </location>
</feature>
<gene>
    <name type="ordered locus">PTH_1024</name>
</gene>
<sequence length="243" mass="26453">MSGHSKWSTIKRKKAKVDAQRGKIFTRLAREIIVAARQGGGDPESNVRLKAAIQRAKEANVPNENIMRAIQKGTGELGGANYEEIIYEGYGPGGAAVMIEIMTDNRNRTAGEIRHIFARNGGSLGETGCVAWMFEEKGLIVVEKKGSEPDEDSLMLLALEAGADDFKAEEDSYEITTAPGDLQKVRGALEGAGVKIALAEVAMIPQTTVKLEGDDAERMTRLVDALEEHDDVQNVYANYEIED</sequence>
<keyword id="KW-0963">Cytoplasm</keyword>
<keyword id="KW-0238">DNA-binding</keyword>
<keyword id="KW-1185">Reference proteome</keyword>
<keyword id="KW-0804">Transcription</keyword>
<keyword id="KW-0805">Transcription regulation</keyword>
<protein>
    <recommendedName>
        <fullName evidence="1">Probable transcriptional regulatory protein PTH_1024</fullName>
    </recommendedName>
</protein>
<evidence type="ECO:0000255" key="1">
    <source>
        <dbReference type="HAMAP-Rule" id="MF_00693"/>
    </source>
</evidence>
<reference key="1">
    <citation type="journal article" date="2008" name="Genome Res.">
        <title>The genome of Pelotomaculum thermopropionicum reveals niche-associated evolution in anaerobic microbiota.</title>
        <authorList>
            <person name="Kosaka T."/>
            <person name="Kato S."/>
            <person name="Shimoyama T."/>
            <person name="Ishii S."/>
            <person name="Abe T."/>
            <person name="Watanabe K."/>
        </authorList>
    </citation>
    <scope>NUCLEOTIDE SEQUENCE [LARGE SCALE GENOMIC DNA]</scope>
    <source>
        <strain>DSM 13744 / JCM 10971 / SI</strain>
    </source>
</reference>
<comment type="subcellular location">
    <subcellularLocation>
        <location evidence="1">Cytoplasm</location>
    </subcellularLocation>
</comment>
<comment type="similarity">
    <text evidence="1">Belongs to the TACO1 family.</text>
</comment>
<name>Y1024_PELTS</name>